<accession>O82133</accession>
<feature type="chain" id="PRO_0000112535" description="Dehydration-responsive element-binding protein 2B">
    <location>
        <begin position="1"/>
        <end position="330"/>
    </location>
</feature>
<feature type="DNA-binding region" description="AP2/ERF" evidence="2">
    <location>
        <begin position="77"/>
        <end position="134"/>
    </location>
</feature>
<feature type="region of interest" description="Disordered" evidence="3">
    <location>
        <begin position="1"/>
        <end position="24"/>
    </location>
</feature>
<feature type="region of interest" description="Disordered" evidence="3">
    <location>
        <begin position="46"/>
        <end position="71"/>
    </location>
</feature>
<feature type="region of interest" description="Disordered" evidence="3">
    <location>
        <begin position="225"/>
        <end position="248"/>
    </location>
</feature>
<feature type="region of interest" description="Disordered" evidence="3">
    <location>
        <begin position="283"/>
        <end position="330"/>
    </location>
</feature>
<feature type="coiled-coil region" evidence="1">
    <location>
        <begin position="230"/>
        <end position="247"/>
    </location>
</feature>
<feature type="short sequence motif" description="Nuclear localization signal" evidence="1">
    <location>
        <begin position="13"/>
        <end position="54"/>
    </location>
</feature>
<feature type="compositionally biased region" description="Polar residues" evidence="3">
    <location>
        <begin position="1"/>
        <end position="10"/>
    </location>
</feature>
<feature type="compositionally biased region" description="Basic residues" evidence="3">
    <location>
        <begin position="51"/>
        <end position="65"/>
    </location>
</feature>
<feature type="compositionally biased region" description="Low complexity" evidence="3">
    <location>
        <begin position="237"/>
        <end position="248"/>
    </location>
</feature>
<feature type="compositionally biased region" description="Polar residues" evidence="3">
    <location>
        <begin position="294"/>
        <end position="306"/>
    </location>
</feature>
<feature type="compositionally biased region" description="Basic and acidic residues" evidence="3">
    <location>
        <begin position="310"/>
        <end position="321"/>
    </location>
</feature>
<protein>
    <recommendedName>
        <fullName>Dehydration-responsive element-binding protein 2B</fullName>
        <shortName>Protein DREB2B</shortName>
    </recommendedName>
</protein>
<evidence type="ECO:0000255" key="1"/>
<evidence type="ECO:0000255" key="2">
    <source>
        <dbReference type="PROSITE-ProRule" id="PRU00366"/>
    </source>
</evidence>
<evidence type="ECO:0000256" key="3">
    <source>
        <dbReference type="SAM" id="MobiDB-lite"/>
    </source>
</evidence>
<evidence type="ECO:0000269" key="4">
    <source>
    </source>
</evidence>
<evidence type="ECO:0000269" key="5">
    <source>
    </source>
</evidence>
<evidence type="ECO:0000269" key="6">
    <source>
    </source>
</evidence>
<evidence type="ECO:0000305" key="7"/>
<name>DRE2B_ARATH</name>
<reference key="1">
    <citation type="journal article" date="1998" name="Plant Cell">
        <title>Two transcription factors, DREB1 and DREB2, with an EREBP/AP2 DNA binding domain separate two cellular signal transduction pathways in drought- and low-temperature-responsive gene expression, respectively, in Arabidopsis.</title>
        <authorList>
            <person name="Liu Q."/>
            <person name="Kasuga M."/>
            <person name="Sakuma Y."/>
            <person name="Abe H."/>
            <person name="Miura S."/>
            <person name="Yamaguchi-Shinozaki K."/>
            <person name="Shinozaki K."/>
        </authorList>
    </citation>
    <scope>NUCLEOTIDE SEQUENCE [MRNA]</scope>
    <scope>INDUCTION</scope>
    <source>
        <strain>cv. Columbia</strain>
    </source>
</reference>
<reference key="2">
    <citation type="journal article" date="2000" name="Plant Mol. Biol.">
        <title>Organization and expression of two Arabidopsis DREB2 genes encoding DRE-binding proteins involved in dehydration- and high-salinity-responsive gene expression.</title>
        <authorList>
            <person name="Nakashima K."/>
            <person name="Shinwari Z.K."/>
            <person name="Sakuma Y."/>
            <person name="Seki M."/>
            <person name="Miura S."/>
            <person name="Shinozaki K."/>
            <person name="Yamaguchi-Shinozaki K."/>
        </authorList>
    </citation>
    <scope>NUCLEOTIDE SEQUENCE [GENOMIC DNA]</scope>
    <scope>TISSUE SPECIFICITY</scope>
    <scope>INDUCTION</scope>
    <source>
        <strain>cv. Columbia</strain>
    </source>
</reference>
<reference key="3">
    <citation type="journal article" date="2000" name="Nature">
        <title>Sequence and analysis of chromosome 3 of the plant Arabidopsis thaliana.</title>
        <authorList>
            <person name="Salanoubat M."/>
            <person name="Lemcke K."/>
            <person name="Rieger M."/>
            <person name="Ansorge W."/>
            <person name="Unseld M."/>
            <person name="Fartmann B."/>
            <person name="Valle G."/>
            <person name="Bloecker H."/>
            <person name="Perez-Alonso M."/>
            <person name="Obermaier B."/>
            <person name="Delseny M."/>
            <person name="Boutry M."/>
            <person name="Grivell L.A."/>
            <person name="Mache R."/>
            <person name="Puigdomenech P."/>
            <person name="De Simone V."/>
            <person name="Choisne N."/>
            <person name="Artiguenave F."/>
            <person name="Robert C."/>
            <person name="Brottier P."/>
            <person name="Wincker P."/>
            <person name="Cattolico L."/>
            <person name="Weissenbach J."/>
            <person name="Saurin W."/>
            <person name="Quetier F."/>
            <person name="Schaefer M."/>
            <person name="Mueller-Auer S."/>
            <person name="Gabel C."/>
            <person name="Fuchs M."/>
            <person name="Benes V."/>
            <person name="Wurmbach E."/>
            <person name="Drzonek H."/>
            <person name="Erfle H."/>
            <person name="Jordan N."/>
            <person name="Bangert S."/>
            <person name="Wiedelmann R."/>
            <person name="Kranz H."/>
            <person name="Voss H."/>
            <person name="Holland R."/>
            <person name="Brandt P."/>
            <person name="Nyakatura G."/>
            <person name="Vezzi A."/>
            <person name="D'Angelo M."/>
            <person name="Pallavicini A."/>
            <person name="Toppo S."/>
            <person name="Simionati B."/>
            <person name="Conrad A."/>
            <person name="Hornischer K."/>
            <person name="Kauer G."/>
            <person name="Loehnert T.-H."/>
            <person name="Nordsiek G."/>
            <person name="Reichelt J."/>
            <person name="Scharfe M."/>
            <person name="Schoen O."/>
            <person name="Bargues M."/>
            <person name="Terol J."/>
            <person name="Climent J."/>
            <person name="Navarro P."/>
            <person name="Collado C."/>
            <person name="Perez-Perez A."/>
            <person name="Ottenwaelder B."/>
            <person name="Duchemin D."/>
            <person name="Cooke R."/>
            <person name="Laudie M."/>
            <person name="Berger-Llauro C."/>
            <person name="Purnelle B."/>
            <person name="Masuy D."/>
            <person name="de Haan M."/>
            <person name="Maarse A.C."/>
            <person name="Alcaraz J.-P."/>
            <person name="Cottet A."/>
            <person name="Casacuberta E."/>
            <person name="Monfort A."/>
            <person name="Argiriou A."/>
            <person name="Flores M."/>
            <person name="Liguori R."/>
            <person name="Vitale D."/>
            <person name="Mannhaupt G."/>
            <person name="Haase D."/>
            <person name="Schoof H."/>
            <person name="Rudd S."/>
            <person name="Zaccaria P."/>
            <person name="Mewes H.-W."/>
            <person name="Mayer K.F.X."/>
            <person name="Kaul S."/>
            <person name="Town C.D."/>
            <person name="Koo H.L."/>
            <person name="Tallon L.J."/>
            <person name="Jenkins J."/>
            <person name="Rooney T."/>
            <person name="Rizzo M."/>
            <person name="Walts A."/>
            <person name="Utterback T."/>
            <person name="Fujii C.Y."/>
            <person name="Shea T.P."/>
            <person name="Creasy T.H."/>
            <person name="Haas B."/>
            <person name="Maiti R."/>
            <person name="Wu D."/>
            <person name="Peterson J."/>
            <person name="Van Aken S."/>
            <person name="Pai G."/>
            <person name="Militscher J."/>
            <person name="Sellers P."/>
            <person name="Gill J.E."/>
            <person name="Feldblyum T.V."/>
            <person name="Preuss D."/>
            <person name="Lin X."/>
            <person name="Nierman W.C."/>
            <person name="Salzberg S.L."/>
            <person name="White O."/>
            <person name="Venter J.C."/>
            <person name="Fraser C.M."/>
            <person name="Kaneko T."/>
            <person name="Nakamura Y."/>
            <person name="Sato S."/>
            <person name="Kato T."/>
            <person name="Asamizu E."/>
            <person name="Sasamoto S."/>
            <person name="Kimura T."/>
            <person name="Idesawa K."/>
            <person name="Kawashima K."/>
            <person name="Kishida Y."/>
            <person name="Kiyokawa C."/>
            <person name="Kohara M."/>
            <person name="Matsumoto M."/>
            <person name="Matsuno A."/>
            <person name="Muraki A."/>
            <person name="Nakayama S."/>
            <person name="Nakazaki N."/>
            <person name="Shinpo S."/>
            <person name="Takeuchi C."/>
            <person name="Wada T."/>
            <person name="Watanabe A."/>
            <person name="Yamada M."/>
            <person name="Yasuda M."/>
            <person name="Tabata S."/>
        </authorList>
    </citation>
    <scope>NUCLEOTIDE SEQUENCE [LARGE SCALE GENOMIC DNA]</scope>
    <source>
        <strain>cv. Columbia</strain>
    </source>
</reference>
<reference key="4">
    <citation type="journal article" date="2017" name="Plant J.">
        <title>Araport11: a complete reannotation of the Arabidopsis thaliana reference genome.</title>
        <authorList>
            <person name="Cheng C.Y."/>
            <person name="Krishnakumar V."/>
            <person name="Chan A.P."/>
            <person name="Thibaud-Nissen F."/>
            <person name="Schobel S."/>
            <person name="Town C.D."/>
        </authorList>
    </citation>
    <scope>GENOME REANNOTATION</scope>
    <source>
        <strain>cv. Columbia</strain>
    </source>
</reference>
<reference key="5">
    <citation type="journal article" date="2002" name="Science">
        <title>Functional annotation of a full-length Arabidopsis cDNA collection.</title>
        <authorList>
            <person name="Seki M."/>
            <person name="Narusaka M."/>
            <person name="Kamiya A."/>
            <person name="Ishida J."/>
            <person name="Satou M."/>
            <person name="Sakurai T."/>
            <person name="Nakajima M."/>
            <person name="Enju A."/>
            <person name="Akiyama K."/>
            <person name="Oono Y."/>
            <person name="Muramatsu M."/>
            <person name="Hayashizaki Y."/>
            <person name="Kawai J."/>
            <person name="Carninci P."/>
            <person name="Itoh M."/>
            <person name="Ishii Y."/>
            <person name="Arakawa T."/>
            <person name="Shibata K."/>
            <person name="Shinagawa A."/>
            <person name="Shinozaki K."/>
        </authorList>
    </citation>
    <scope>NUCLEOTIDE SEQUENCE [LARGE SCALE MRNA]</scope>
    <source>
        <strain>cv. Columbia</strain>
    </source>
</reference>
<reference key="6">
    <citation type="journal article" date="2003" name="Science">
        <title>Empirical analysis of transcriptional activity in the Arabidopsis genome.</title>
        <authorList>
            <person name="Yamada K."/>
            <person name="Lim J."/>
            <person name="Dale J.M."/>
            <person name="Chen H."/>
            <person name="Shinn P."/>
            <person name="Palm C.J."/>
            <person name="Southwick A.M."/>
            <person name="Wu H.C."/>
            <person name="Kim C.J."/>
            <person name="Nguyen M."/>
            <person name="Pham P.K."/>
            <person name="Cheuk R.F."/>
            <person name="Karlin-Newmann G."/>
            <person name="Liu S.X."/>
            <person name="Lam B."/>
            <person name="Sakano H."/>
            <person name="Wu T."/>
            <person name="Yu G."/>
            <person name="Miranda M."/>
            <person name="Quach H.L."/>
            <person name="Tripp M."/>
            <person name="Chang C.H."/>
            <person name="Lee J.M."/>
            <person name="Toriumi M.J."/>
            <person name="Chan M.M."/>
            <person name="Tang C.C."/>
            <person name="Onodera C.S."/>
            <person name="Deng J.M."/>
            <person name="Akiyama K."/>
            <person name="Ansari Y."/>
            <person name="Arakawa T."/>
            <person name="Banh J."/>
            <person name="Banno F."/>
            <person name="Bowser L."/>
            <person name="Brooks S.Y."/>
            <person name="Carninci P."/>
            <person name="Chao Q."/>
            <person name="Choy N."/>
            <person name="Enju A."/>
            <person name="Goldsmith A.D."/>
            <person name="Gurjal M."/>
            <person name="Hansen N.F."/>
            <person name="Hayashizaki Y."/>
            <person name="Johnson-Hopson C."/>
            <person name="Hsuan V.W."/>
            <person name="Iida K."/>
            <person name="Karnes M."/>
            <person name="Khan S."/>
            <person name="Koesema E."/>
            <person name="Ishida J."/>
            <person name="Jiang P.X."/>
            <person name="Jones T."/>
            <person name="Kawai J."/>
            <person name="Kamiya A."/>
            <person name="Meyers C."/>
            <person name="Nakajima M."/>
            <person name="Narusaka M."/>
            <person name="Seki M."/>
            <person name="Sakurai T."/>
            <person name="Satou M."/>
            <person name="Tamse R."/>
            <person name="Vaysberg M."/>
            <person name="Wallender E.K."/>
            <person name="Wong C."/>
            <person name="Yamamura Y."/>
            <person name="Yuan S."/>
            <person name="Shinozaki K."/>
            <person name="Davis R.W."/>
            <person name="Theologis A."/>
            <person name="Ecker J.R."/>
        </authorList>
    </citation>
    <scope>NUCLEOTIDE SEQUENCE [LARGE SCALE MRNA]</scope>
    <source>
        <strain>cv. Columbia</strain>
    </source>
</reference>
<reference key="7">
    <citation type="journal article" date="2002" name="Biochem. Biophys. Res. Commun.">
        <title>DNA-binding specificity of the ERF/AP2 domain of Arabidopsis DREBs, transcription factors involved in dehydration- and cold-inducible gene expression.</title>
        <authorList>
            <person name="Sakuma Y."/>
            <person name="Liu Q."/>
            <person name="Dubouzet J.G."/>
            <person name="Abe H."/>
            <person name="Shinozaki K."/>
            <person name="Yamaguchi-Shinozaki K."/>
        </authorList>
    </citation>
    <scope>GENE FAMILY</scope>
    <scope>FUNCTION</scope>
</reference>
<reference key="8">
    <citation type="journal article" date="2006" name="Plant Physiol.">
        <title>Genome-wide analysis of the ERF gene family in Arabidopsis and rice.</title>
        <authorList>
            <person name="Nakano T."/>
            <person name="Suzuki K."/>
            <person name="Fujimura T."/>
            <person name="Shinshi H."/>
        </authorList>
    </citation>
    <scope>GENE FAMILY</scope>
    <scope>NOMENCLATURE</scope>
</reference>
<keyword id="KW-0010">Activator</keyword>
<keyword id="KW-0175">Coiled coil</keyword>
<keyword id="KW-0238">DNA-binding</keyword>
<keyword id="KW-0539">Nucleus</keyword>
<keyword id="KW-1185">Reference proteome</keyword>
<keyword id="KW-0346">Stress response</keyword>
<keyword id="KW-0804">Transcription</keyword>
<keyword id="KW-0805">Transcription regulation</keyword>
<organism>
    <name type="scientific">Arabidopsis thaliana</name>
    <name type="common">Mouse-ear cress</name>
    <dbReference type="NCBI Taxonomy" id="3702"/>
    <lineage>
        <taxon>Eukaryota</taxon>
        <taxon>Viridiplantae</taxon>
        <taxon>Streptophyta</taxon>
        <taxon>Embryophyta</taxon>
        <taxon>Tracheophyta</taxon>
        <taxon>Spermatophyta</taxon>
        <taxon>Magnoliopsida</taxon>
        <taxon>eudicotyledons</taxon>
        <taxon>Gunneridae</taxon>
        <taxon>Pentapetalae</taxon>
        <taxon>rosids</taxon>
        <taxon>malvids</taxon>
        <taxon>Brassicales</taxon>
        <taxon>Brassicaceae</taxon>
        <taxon>Camelineae</taxon>
        <taxon>Arabidopsis</taxon>
    </lineage>
</organism>
<dbReference type="EMBL" id="AB007791">
    <property type="protein sequence ID" value="BAA33795.1"/>
    <property type="molecule type" value="mRNA"/>
</dbReference>
<dbReference type="EMBL" id="AB016571">
    <property type="protein sequence ID" value="BAA36706.1"/>
    <property type="molecule type" value="Genomic_DNA"/>
</dbReference>
<dbReference type="EMBL" id="AC009991">
    <property type="protein sequence ID" value="AAF01519.1"/>
    <property type="molecule type" value="Genomic_DNA"/>
</dbReference>
<dbReference type="EMBL" id="CP002686">
    <property type="protein sequence ID" value="AEE74994.1"/>
    <property type="molecule type" value="Genomic_DNA"/>
</dbReference>
<dbReference type="EMBL" id="AK117363">
    <property type="protein sequence ID" value="BAC42033.1"/>
    <property type="molecule type" value="mRNA"/>
</dbReference>
<dbReference type="EMBL" id="BT008351">
    <property type="protein sequence ID" value="AAP37710.1"/>
    <property type="molecule type" value="mRNA"/>
</dbReference>
<dbReference type="PIR" id="T51834">
    <property type="entry name" value="T51834"/>
</dbReference>
<dbReference type="RefSeq" id="NP_187713.1">
    <property type="nucleotide sequence ID" value="NM_111939.3"/>
</dbReference>
<dbReference type="SMR" id="O82133"/>
<dbReference type="BioGRID" id="5607">
    <property type="interactions" value="4"/>
</dbReference>
<dbReference type="FunCoup" id="O82133">
    <property type="interactions" value="14"/>
</dbReference>
<dbReference type="IntAct" id="O82133">
    <property type="interactions" value="4"/>
</dbReference>
<dbReference type="STRING" id="3702.O82133"/>
<dbReference type="PaxDb" id="3702-AT3G11020.1"/>
<dbReference type="EnsemblPlants" id="AT3G11020.1">
    <property type="protein sequence ID" value="AT3G11020.1"/>
    <property type="gene ID" value="AT3G11020"/>
</dbReference>
<dbReference type="GeneID" id="820273"/>
<dbReference type="Gramene" id="AT3G11020.1">
    <property type="protein sequence ID" value="AT3G11020.1"/>
    <property type="gene ID" value="AT3G11020"/>
</dbReference>
<dbReference type="KEGG" id="ath:AT3G11020"/>
<dbReference type="Araport" id="AT3G11020"/>
<dbReference type="TAIR" id="AT3G11020">
    <property type="gene designation" value="DREB2B"/>
</dbReference>
<dbReference type="eggNOG" id="ENOG502QTBU">
    <property type="taxonomic scope" value="Eukaryota"/>
</dbReference>
<dbReference type="HOGENOM" id="CLU_046486_0_1_1"/>
<dbReference type="InParanoid" id="O82133"/>
<dbReference type="OMA" id="CVVASEF"/>
<dbReference type="PhylomeDB" id="O82133"/>
<dbReference type="PRO" id="PR:O82133"/>
<dbReference type="Proteomes" id="UP000006548">
    <property type="component" value="Chromosome 3"/>
</dbReference>
<dbReference type="ExpressionAtlas" id="O82133">
    <property type="expression patterns" value="baseline and differential"/>
</dbReference>
<dbReference type="GO" id="GO:0005634">
    <property type="term" value="C:nucleus"/>
    <property type="evidence" value="ECO:0007669"/>
    <property type="project" value="UniProtKB-SubCell"/>
</dbReference>
<dbReference type="GO" id="GO:0003700">
    <property type="term" value="F:DNA-binding transcription factor activity"/>
    <property type="evidence" value="ECO:0000250"/>
    <property type="project" value="TAIR"/>
</dbReference>
<dbReference type="GO" id="GO:0000976">
    <property type="term" value="F:transcription cis-regulatory region binding"/>
    <property type="evidence" value="ECO:0000353"/>
    <property type="project" value="TAIR"/>
</dbReference>
<dbReference type="GO" id="GO:0010286">
    <property type="term" value="P:heat acclimation"/>
    <property type="evidence" value="ECO:0000270"/>
    <property type="project" value="TAIR"/>
</dbReference>
<dbReference type="GO" id="GO:0009555">
    <property type="term" value="P:pollen development"/>
    <property type="evidence" value="ECO:0000315"/>
    <property type="project" value="TAIR"/>
</dbReference>
<dbReference type="CDD" id="cd00018">
    <property type="entry name" value="AP2"/>
    <property type="match status" value="1"/>
</dbReference>
<dbReference type="FunFam" id="3.30.730.10:FF:000001">
    <property type="entry name" value="Ethylene-responsive transcription factor 2"/>
    <property type="match status" value="1"/>
</dbReference>
<dbReference type="Gene3D" id="3.30.730.10">
    <property type="entry name" value="AP2/ERF domain"/>
    <property type="match status" value="1"/>
</dbReference>
<dbReference type="InterPro" id="IPR001471">
    <property type="entry name" value="AP2/ERF_dom"/>
</dbReference>
<dbReference type="InterPro" id="IPR036955">
    <property type="entry name" value="AP2/ERF_dom_sf"/>
</dbReference>
<dbReference type="InterPro" id="IPR016177">
    <property type="entry name" value="DNA-bd_dom_sf"/>
</dbReference>
<dbReference type="PANTHER" id="PTHR31241:SF74">
    <property type="entry name" value="DEHYDRATION-RESPONSIVE ELEMENT-BINDING PROTEIN 2B"/>
    <property type="match status" value="1"/>
</dbReference>
<dbReference type="PANTHER" id="PTHR31241">
    <property type="entry name" value="DEHYDRATION-RESPONSIVE ELEMENT-BINDING PROTEIN 2C"/>
    <property type="match status" value="1"/>
</dbReference>
<dbReference type="Pfam" id="PF00847">
    <property type="entry name" value="AP2"/>
    <property type="match status" value="1"/>
</dbReference>
<dbReference type="PRINTS" id="PR00367">
    <property type="entry name" value="ETHRSPELEMNT"/>
</dbReference>
<dbReference type="SMART" id="SM00380">
    <property type="entry name" value="AP2"/>
    <property type="match status" value="1"/>
</dbReference>
<dbReference type="SUPFAM" id="SSF54171">
    <property type="entry name" value="DNA-binding domain"/>
    <property type="match status" value="1"/>
</dbReference>
<dbReference type="PROSITE" id="PS51032">
    <property type="entry name" value="AP2_ERF"/>
    <property type="match status" value="1"/>
</dbReference>
<comment type="function">
    <text evidence="5">Transcriptional activator that binds specifically to the DNA sequence 5'-[AG]CCGAC-3'. Binding to the C-repeat/DRE element mediates high salinity- and dehydration-inducible transcription.</text>
</comment>
<comment type="subcellular location">
    <subcellularLocation>
        <location evidence="7">Nucleus</location>
    </subcellularLocation>
</comment>
<comment type="tissue specificity">
    <text evidence="4">Expressed preferentially in roots and stems, and at a lower level in leaves.</text>
</comment>
<comment type="induction">
    <text evidence="4 6">By high-salt and drought stresses.</text>
</comment>
<comment type="similarity">
    <text evidence="7">Belongs to the AP2/ERF transcription factor family. ERF subfamily.</text>
</comment>
<sequence>MAVYEQTGTEQPKKRKSRARAGGLTVADRLKKWKEYNEIVEASAVKEGEKPKRKVPAKGSKKGCMKGKGGPDNSHCSFRGVRQRIWGKWVAEIREPKIGTRLWLGTFPTAEKAASAYDEAATAMYGSLARLNFPQSVGSEFTSTSSQSEVCTVENKAVVCGDVCVKHEDTDCESNPFSQILDVREESCGTRPDSCTVGHQDMNSSLNYDLLLEFEQQYWGQVLQEKEKPKQEEEEIQQQQQEQQQQQLQPDLLTVADYGWPWSNDIVNDQTSWDPNECFDINELLGDLNEPGPHQSQDQNHVNSGSYDLHPLHLEPHDGHEFNGLSSLDI</sequence>
<proteinExistence type="evidence at transcript level"/>
<gene>
    <name type="primary">DREB2B</name>
    <name type="synonym">ERF044</name>
    <name type="ordered locus">At3g11020</name>
    <name type="ORF">F9F8.16</name>
</gene>